<name>SYN_VIBCH</name>
<gene>
    <name evidence="1" type="primary">asnS</name>
    <name type="ordered locus">VC_1297</name>
</gene>
<evidence type="ECO:0000255" key="1">
    <source>
        <dbReference type="HAMAP-Rule" id="MF_00534"/>
    </source>
</evidence>
<evidence type="ECO:0000305" key="2"/>
<protein>
    <recommendedName>
        <fullName evidence="1">Asparagine--tRNA ligase</fullName>
        <ecNumber evidence="1">6.1.1.22</ecNumber>
    </recommendedName>
    <alternativeName>
        <fullName evidence="1">Asparaginyl-tRNA synthetase</fullName>
        <shortName evidence="1">AsnRS</shortName>
    </alternativeName>
</protein>
<dbReference type="EC" id="6.1.1.22" evidence="1"/>
<dbReference type="EMBL" id="AE003852">
    <property type="protein sequence ID" value="AAF94456.1"/>
    <property type="status" value="ALT_INIT"/>
    <property type="molecule type" value="Genomic_DNA"/>
</dbReference>
<dbReference type="PIR" id="E82217">
    <property type="entry name" value="E82217"/>
</dbReference>
<dbReference type="RefSeq" id="NP_230942.2">
    <property type="nucleotide sequence ID" value="NC_002505.1"/>
</dbReference>
<dbReference type="RefSeq" id="WP_000220370.1">
    <property type="nucleotide sequence ID" value="NZ_LT906614.1"/>
</dbReference>
<dbReference type="SMR" id="Q9KSF9"/>
<dbReference type="STRING" id="243277.VC_1297"/>
<dbReference type="DNASU" id="2614751"/>
<dbReference type="EnsemblBacteria" id="AAF94456">
    <property type="protein sequence ID" value="AAF94456"/>
    <property type="gene ID" value="VC_1297"/>
</dbReference>
<dbReference type="GeneID" id="88785999"/>
<dbReference type="KEGG" id="vch:VC_1297"/>
<dbReference type="PATRIC" id="fig|243277.26.peg.1235"/>
<dbReference type="eggNOG" id="COG0017">
    <property type="taxonomic scope" value="Bacteria"/>
</dbReference>
<dbReference type="HOGENOM" id="CLU_004553_2_0_6"/>
<dbReference type="Proteomes" id="UP000000584">
    <property type="component" value="Chromosome 1"/>
</dbReference>
<dbReference type="GO" id="GO:0005737">
    <property type="term" value="C:cytoplasm"/>
    <property type="evidence" value="ECO:0007669"/>
    <property type="project" value="UniProtKB-SubCell"/>
</dbReference>
<dbReference type="GO" id="GO:0004816">
    <property type="term" value="F:asparagine-tRNA ligase activity"/>
    <property type="evidence" value="ECO:0007669"/>
    <property type="project" value="UniProtKB-UniRule"/>
</dbReference>
<dbReference type="GO" id="GO:0005524">
    <property type="term" value="F:ATP binding"/>
    <property type="evidence" value="ECO:0007669"/>
    <property type="project" value="UniProtKB-UniRule"/>
</dbReference>
<dbReference type="GO" id="GO:0003676">
    <property type="term" value="F:nucleic acid binding"/>
    <property type="evidence" value="ECO:0007669"/>
    <property type="project" value="InterPro"/>
</dbReference>
<dbReference type="GO" id="GO:0006421">
    <property type="term" value="P:asparaginyl-tRNA aminoacylation"/>
    <property type="evidence" value="ECO:0000318"/>
    <property type="project" value="GO_Central"/>
</dbReference>
<dbReference type="CDD" id="cd00776">
    <property type="entry name" value="AsxRS_core"/>
    <property type="match status" value="1"/>
</dbReference>
<dbReference type="CDD" id="cd04318">
    <property type="entry name" value="EcAsnRS_like_N"/>
    <property type="match status" value="1"/>
</dbReference>
<dbReference type="FunFam" id="3.30.930.10:FF:000016">
    <property type="entry name" value="Asparagine--tRNA ligase"/>
    <property type="match status" value="1"/>
</dbReference>
<dbReference type="Gene3D" id="3.30.930.10">
    <property type="entry name" value="Bira Bifunctional Protein, Domain 2"/>
    <property type="match status" value="1"/>
</dbReference>
<dbReference type="Gene3D" id="2.40.50.140">
    <property type="entry name" value="Nucleic acid-binding proteins"/>
    <property type="match status" value="1"/>
</dbReference>
<dbReference type="HAMAP" id="MF_00534">
    <property type="entry name" value="Asn_tRNA_synth"/>
    <property type="match status" value="1"/>
</dbReference>
<dbReference type="InterPro" id="IPR004364">
    <property type="entry name" value="Aa-tRNA-synt_II"/>
</dbReference>
<dbReference type="InterPro" id="IPR006195">
    <property type="entry name" value="aa-tRNA-synth_II"/>
</dbReference>
<dbReference type="InterPro" id="IPR045864">
    <property type="entry name" value="aa-tRNA-synth_II/BPL/LPL"/>
</dbReference>
<dbReference type="InterPro" id="IPR004522">
    <property type="entry name" value="Asn-tRNA-ligase"/>
</dbReference>
<dbReference type="InterPro" id="IPR002312">
    <property type="entry name" value="Asp/Asn-tRNA-synth_IIb"/>
</dbReference>
<dbReference type="InterPro" id="IPR012340">
    <property type="entry name" value="NA-bd_OB-fold"/>
</dbReference>
<dbReference type="InterPro" id="IPR004365">
    <property type="entry name" value="NA-bd_OB_tRNA"/>
</dbReference>
<dbReference type="NCBIfam" id="TIGR00457">
    <property type="entry name" value="asnS"/>
    <property type="match status" value="1"/>
</dbReference>
<dbReference type="NCBIfam" id="NF003037">
    <property type="entry name" value="PRK03932.1"/>
    <property type="match status" value="1"/>
</dbReference>
<dbReference type="PANTHER" id="PTHR22594:SF34">
    <property type="entry name" value="ASPARAGINE--TRNA LIGASE, MITOCHONDRIAL-RELATED"/>
    <property type="match status" value="1"/>
</dbReference>
<dbReference type="PANTHER" id="PTHR22594">
    <property type="entry name" value="ASPARTYL/LYSYL-TRNA SYNTHETASE"/>
    <property type="match status" value="1"/>
</dbReference>
<dbReference type="Pfam" id="PF00152">
    <property type="entry name" value="tRNA-synt_2"/>
    <property type="match status" value="1"/>
</dbReference>
<dbReference type="Pfam" id="PF01336">
    <property type="entry name" value="tRNA_anti-codon"/>
    <property type="match status" value="1"/>
</dbReference>
<dbReference type="PRINTS" id="PR01042">
    <property type="entry name" value="TRNASYNTHASP"/>
</dbReference>
<dbReference type="SUPFAM" id="SSF55681">
    <property type="entry name" value="Class II aaRS and biotin synthetases"/>
    <property type="match status" value="1"/>
</dbReference>
<dbReference type="SUPFAM" id="SSF50249">
    <property type="entry name" value="Nucleic acid-binding proteins"/>
    <property type="match status" value="1"/>
</dbReference>
<dbReference type="PROSITE" id="PS50862">
    <property type="entry name" value="AA_TRNA_LIGASE_II"/>
    <property type="match status" value="1"/>
</dbReference>
<organism>
    <name type="scientific">Vibrio cholerae serotype O1 (strain ATCC 39315 / El Tor Inaba N16961)</name>
    <dbReference type="NCBI Taxonomy" id="243277"/>
    <lineage>
        <taxon>Bacteria</taxon>
        <taxon>Pseudomonadati</taxon>
        <taxon>Pseudomonadota</taxon>
        <taxon>Gammaproteobacteria</taxon>
        <taxon>Vibrionales</taxon>
        <taxon>Vibrionaceae</taxon>
        <taxon>Vibrio</taxon>
    </lineage>
</organism>
<proteinExistence type="inferred from homology"/>
<feature type="chain" id="PRO_0000176474" description="Asparagine--tRNA ligase">
    <location>
        <begin position="1"/>
        <end position="466"/>
    </location>
</feature>
<comment type="catalytic activity">
    <reaction evidence="1">
        <text>tRNA(Asn) + L-asparagine + ATP = L-asparaginyl-tRNA(Asn) + AMP + diphosphate + H(+)</text>
        <dbReference type="Rhea" id="RHEA:11180"/>
        <dbReference type="Rhea" id="RHEA-COMP:9659"/>
        <dbReference type="Rhea" id="RHEA-COMP:9674"/>
        <dbReference type="ChEBI" id="CHEBI:15378"/>
        <dbReference type="ChEBI" id="CHEBI:30616"/>
        <dbReference type="ChEBI" id="CHEBI:33019"/>
        <dbReference type="ChEBI" id="CHEBI:58048"/>
        <dbReference type="ChEBI" id="CHEBI:78442"/>
        <dbReference type="ChEBI" id="CHEBI:78515"/>
        <dbReference type="ChEBI" id="CHEBI:456215"/>
        <dbReference type="EC" id="6.1.1.22"/>
    </reaction>
</comment>
<comment type="subunit">
    <text evidence="1">Homodimer.</text>
</comment>
<comment type="subcellular location">
    <subcellularLocation>
        <location evidence="1">Cytoplasm</location>
    </subcellularLocation>
</comment>
<comment type="similarity">
    <text evidence="1">Belongs to the class-II aminoacyl-tRNA synthetase family.</text>
</comment>
<comment type="sequence caution" evidence="2">
    <conflict type="erroneous initiation">
        <sequence resource="EMBL-CDS" id="AAF94456"/>
    </conflict>
</comment>
<accession>Q9KSF9</accession>
<sequence>MTYAPVNDVLSGKLAVDSEVTVRGWIRTRRDSKAGISFLAIYDGSCFNPIQAVVPNNLNNYDNEVLKLTTGCSVEVTGKIVESPASGQAFELAASDVKVVGWVEDADTYPMAKTRHSIEYLREVAHLRPRTNVIGAVARVRNCLAQAIHRFYHEQGYFWVSAPLITASDAEGAGEMFRVSTLDMENLPRTDAGKVDYNQDFFGKETFLTVSGQLNAEAYACAISKVYTFGPTFRAENSNTSRHLAEFWMVEPEVAFADLNTVAKLAEDMLKYVFKAVLAERRDDLEFFNDRINNEVIARLEQFVESDFAQVDYTDAIEILKNCGKTFEFPVEWGIDLASEHERFLAEEHFKAPVIVKNYPKDIKAFYMRMNEDGKTVAAMDVLAPGIGEIIGGSQREERLDILDARMREFGIDPEHMDWYRDLRRYGTVPHAGFGLGFERLVSYVTGMGNVRDVIPFPRTPRSASF</sequence>
<reference key="1">
    <citation type="journal article" date="2000" name="Nature">
        <title>DNA sequence of both chromosomes of the cholera pathogen Vibrio cholerae.</title>
        <authorList>
            <person name="Heidelberg J.F."/>
            <person name="Eisen J.A."/>
            <person name="Nelson W.C."/>
            <person name="Clayton R.A."/>
            <person name="Gwinn M.L."/>
            <person name="Dodson R.J."/>
            <person name="Haft D.H."/>
            <person name="Hickey E.K."/>
            <person name="Peterson J.D."/>
            <person name="Umayam L.A."/>
            <person name="Gill S.R."/>
            <person name="Nelson K.E."/>
            <person name="Read T.D."/>
            <person name="Tettelin H."/>
            <person name="Richardson D.L."/>
            <person name="Ermolaeva M.D."/>
            <person name="Vamathevan J.J."/>
            <person name="Bass S."/>
            <person name="Qin H."/>
            <person name="Dragoi I."/>
            <person name="Sellers P."/>
            <person name="McDonald L.A."/>
            <person name="Utterback T.R."/>
            <person name="Fleischmann R.D."/>
            <person name="Nierman W.C."/>
            <person name="White O."/>
            <person name="Salzberg S.L."/>
            <person name="Smith H.O."/>
            <person name="Colwell R.R."/>
            <person name="Mekalanos J.J."/>
            <person name="Venter J.C."/>
            <person name="Fraser C.M."/>
        </authorList>
    </citation>
    <scope>NUCLEOTIDE SEQUENCE [LARGE SCALE GENOMIC DNA]</scope>
    <source>
        <strain>ATCC 39315 / El Tor Inaba N16961</strain>
    </source>
</reference>
<keyword id="KW-0030">Aminoacyl-tRNA synthetase</keyword>
<keyword id="KW-0067">ATP-binding</keyword>
<keyword id="KW-0963">Cytoplasm</keyword>
<keyword id="KW-0436">Ligase</keyword>
<keyword id="KW-0547">Nucleotide-binding</keyword>
<keyword id="KW-0648">Protein biosynthesis</keyword>
<keyword id="KW-1185">Reference proteome</keyword>